<accession>Q6DG52</accession>
<accession>Q8VCP1</accession>
<evidence type="ECO:0000250" key="1"/>
<evidence type="ECO:0000250" key="2">
    <source>
        <dbReference type="UniProtKB" id="Q5U3N7"/>
    </source>
</evidence>
<evidence type="ECO:0000250" key="3">
    <source>
        <dbReference type="UniProtKB" id="Q8WUH1"/>
    </source>
</evidence>
<evidence type="ECO:0000250" key="4">
    <source>
        <dbReference type="UniProtKB" id="Q9DFZ3"/>
    </source>
</evidence>
<evidence type="ECO:0000303" key="5">
    <source>
    </source>
</evidence>
<evidence type="ECO:0000305" key="6"/>
<name>CHUR_MOUSE</name>
<gene>
    <name type="primary">Churc1</name>
</gene>
<proteinExistence type="inferred from homology"/>
<feature type="chain" id="PRO_0000089666" description="Protein Churchill">
    <location>
        <begin position="1"/>
        <end position="112"/>
    </location>
</feature>
<feature type="binding site" evidence="1">
    <location>
        <position position="2"/>
    </location>
    <ligand>
        <name>Zn(2+)</name>
        <dbReference type="ChEBI" id="CHEBI:29105"/>
        <label>1</label>
    </ligand>
</feature>
<feature type="binding site" evidence="1">
    <location>
        <position position="5"/>
    </location>
    <ligand>
        <name>Zn(2+)</name>
        <dbReference type="ChEBI" id="CHEBI:29105"/>
        <label>1</label>
    </ligand>
</feature>
<feature type="binding site" evidence="1">
    <location>
        <position position="30"/>
    </location>
    <ligand>
        <name>Zn(2+)</name>
        <dbReference type="ChEBI" id="CHEBI:29105"/>
        <label>1</label>
    </ligand>
</feature>
<feature type="binding site" evidence="1">
    <location>
        <position position="30"/>
    </location>
    <ligand>
        <name>Zn(2+)</name>
        <dbReference type="ChEBI" id="CHEBI:29105"/>
        <label>2</label>
    </ligand>
</feature>
<feature type="binding site" evidence="1">
    <location>
        <position position="33"/>
    </location>
    <ligand>
        <name>Zn(2+)</name>
        <dbReference type="ChEBI" id="CHEBI:29105"/>
        <label>2</label>
    </ligand>
</feature>
<feature type="binding site" evidence="1">
    <location>
        <position position="59"/>
    </location>
    <ligand>
        <name>Zn(2+)</name>
        <dbReference type="ChEBI" id="CHEBI:29105"/>
        <label>3</label>
    </ligand>
</feature>
<feature type="binding site" evidence="1">
    <location>
        <position position="61"/>
    </location>
    <ligand>
        <name>Zn(2+)</name>
        <dbReference type="ChEBI" id="CHEBI:29105"/>
        <label>2</label>
    </ligand>
</feature>
<feature type="binding site" evidence="1">
    <location>
        <position position="64"/>
    </location>
    <ligand>
        <name>Zn(2+)</name>
        <dbReference type="ChEBI" id="CHEBI:29105"/>
        <label>2</label>
    </ligand>
</feature>
<feature type="binding site" evidence="1">
    <location>
        <position position="66"/>
    </location>
    <ligand>
        <name>Zn(2+)</name>
        <dbReference type="ChEBI" id="CHEBI:29105"/>
        <label>1</label>
    </ligand>
</feature>
<feature type="binding site" evidence="1">
    <location>
        <position position="71"/>
    </location>
    <ligand>
        <name>Zn(2+)</name>
        <dbReference type="ChEBI" id="CHEBI:29105"/>
        <label>3</label>
    </ligand>
</feature>
<feature type="binding site" evidence="1">
    <location>
        <position position="88"/>
    </location>
    <ligand>
        <name>Zn(2+)</name>
        <dbReference type="ChEBI" id="CHEBI:29105"/>
        <label>3</label>
    </ligand>
</feature>
<feature type="binding site" evidence="1">
    <location>
        <position position="91"/>
    </location>
    <ligand>
        <name>Zn(2+)</name>
        <dbReference type="ChEBI" id="CHEBI:29105"/>
        <label>3</label>
    </ligand>
</feature>
<feature type="splice variant" id="VSP_013378" description="In isoform 2." evidence="5">
    <original>HLCKNCHHVVAR</original>
    <variation>RIYHAVSVVWQS</variation>
    <location>
        <begin position="59"/>
        <end position="70"/>
    </location>
</feature>
<feature type="splice variant" id="VSP_013379" description="In isoform 2." evidence="5">
    <location>
        <begin position="71"/>
        <end position="112"/>
    </location>
</feature>
<protein>
    <recommendedName>
        <fullName>Protein Churchill</fullName>
    </recommendedName>
</protein>
<sequence length="112" mass="12858">MCGDCVEKEYPNRGTTCLENGSFLLNFAGCAVCSKRDFMLITNRSLKEEDGEEIVTYDHLCKNCHHVVARHEYTFSIMDEFQEYTMLCLLCGKAEDTISILPDDPRQMTLLF</sequence>
<keyword id="KW-0010">Activator</keyword>
<keyword id="KW-0025">Alternative splicing</keyword>
<keyword id="KW-0217">Developmental protein</keyword>
<keyword id="KW-0479">Metal-binding</keyword>
<keyword id="KW-1185">Reference proteome</keyword>
<keyword id="KW-0804">Transcription</keyword>
<keyword id="KW-0805">Transcription regulation</keyword>
<keyword id="KW-0862">Zinc</keyword>
<comment type="function">
    <text evidence="2 3 4">Transcriptional activator that mediates FGF signaling during neural development (By similarity). Plays a role in the regulation of cell movement (By similarity). Does not bind DNA by itself (By similarity).</text>
</comment>
<comment type="alternative products">
    <event type="alternative splicing"/>
    <isoform>
        <id>Q6DG52-1</id>
        <name>1</name>
        <sequence type="displayed"/>
    </isoform>
    <isoform>
        <id>Q6DG52-2</id>
        <name>2</name>
        <sequence type="described" ref="VSP_013378 VSP_013379"/>
    </isoform>
</comment>
<comment type="similarity">
    <text evidence="6">Belongs to the Churchill family.</text>
</comment>
<dbReference type="EMBL" id="BC019472">
    <property type="protein sequence ID" value="AAH19472.1"/>
    <property type="molecule type" value="mRNA"/>
</dbReference>
<dbReference type="EMBL" id="BC076499">
    <property type="protein sequence ID" value="AAH76499.1"/>
    <property type="molecule type" value="mRNA"/>
</dbReference>
<dbReference type="CCDS" id="CCDS36478.1">
    <molecule id="Q6DG52-1"/>
</dbReference>
<dbReference type="RefSeq" id="NP_996257.1">
    <molecule id="Q6DG52-1"/>
    <property type="nucleotide sequence ID" value="NM_206534.2"/>
</dbReference>
<dbReference type="SMR" id="Q6DG52"/>
<dbReference type="FunCoup" id="Q6DG52">
    <property type="interactions" value="1580"/>
</dbReference>
<dbReference type="STRING" id="10090.ENSMUSP00000047015"/>
<dbReference type="PhosphoSitePlus" id="Q6DG52"/>
<dbReference type="PaxDb" id="10090-ENSMUSP00000047015"/>
<dbReference type="PeptideAtlas" id="Q6DG52"/>
<dbReference type="ProteomicsDB" id="279077">
    <molecule id="Q6DG52-1"/>
</dbReference>
<dbReference type="ProteomicsDB" id="279078">
    <molecule id="Q6DG52-2"/>
</dbReference>
<dbReference type="Pumba" id="Q6DG52"/>
<dbReference type="Antibodypedia" id="51632">
    <property type="antibodies" value="61 antibodies from 18 providers"/>
</dbReference>
<dbReference type="Ensembl" id="ENSMUST00000041262.14">
    <molecule id="Q6DG52-1"/>
    <property type="protein sequence ID" value="ENSMUSP00000047015.8"/>
    <property type="gene ID" value="ENSMUSG00000090258.8"/>
</dbReference>
<dbReference type="Ensembl" id="ENSMUST00000110399.3">
    <molecule id="Q6DG52-2"/>
    <property type="protein sequence ID" value="ENSMUSP00000106029.3"/>
    <property type="gene ID" value="ENSMUSG00000090258.8"/>
</dbReference>
<dbReference type="GeneID" id="211151"/>
<dbReference type="KEGG" id="mmu:211151"/>
<dbReference type="UCSC" id="uc007nyq.1">
    <molecule id="Q6DG52-1"/>
    <property type="organism name" value="mouse"/>
</dbReference>
<dbReference type="UCSC" id="uc007nyr.1">
    <molecule id="Q6DG52-2"/>
    <property type="organism name" value="mouse"/>
</dbReference>
<dbReference type="AGR" id="MGI:1923684"/>
<dbReference type="CTD" id="91612"/>
<dbReference type="MGI" id="MGI:1923684">
    <property type="gene designation" value="Churc1"/>
</dbReference>
<dbReference type="VEuPathDB" id="HostDB:ENSMUSG00000090258"/>
<dbReference type="eggNOG" id="ENOG502S4AE">
    <property type="taxonomic scope" value="Eukaryota"/>
</dbReference>
<dbReference type="GeneTree" id="ENSGT00390000011163"/>
<dbReference type="HOGENOM" id="CLU_142022_0_0_1"/>
<dbReference type="InParanoid" id="Q6DG52"/>
<dbReference type="OMA" id="ASHEYTF"/>
<dbReference type="OrthoDB" id="184at9989"/>
<dbReference type="PhylomeDB" id="Q6DG52"/>
<dbReference type="TreeFam" id="TF333004"/>
<dbReference type="BioGRID-ORCS" id="211151">
    <property type="hits" value="0 hits in 76 CRISPR screens"/>
</dbReference>
<dbReference type="ChiTaRS" id="Churc1">
    <property type="organism name" value="mouse"/>
</dbReference>
<dbReference type="PRO" id="PR:Q6DG52"/>
<dbReference type="Proteomes" id="UP000000589">
    <property type="component" value="Chromosome 12"/>
</dbReference>
<dbReference type="RNAct" id="Q6DG52">
    <property type="molecule type" value="protein"/>
</dbReference>
<dbReference type="Bgee" id="ENSMUSG00000090258">
    <property type="expression patterns" value="Expressed in epiblast cell in embryo and 70 other cell types or tissues"/>
</dbReference>
<dbReference type="ExpressionAtlas" id="Q6DG52">
    <property type="expression patterns" value="baseline and differential"/>
</dbReference>
<dbReference type="GO" id="GO:0005634">
    <property type="term" value="C:nucleus"/>
    <property type="evidence" value="ECO:0000247"/>
    <property type="project" value="MGI"/>
</dbReference>
<dbReference type="GO" id="GO:0003677">
    <property type="term" value="F:DNA binding"/>
    <property type="evidence" value="ECO:0000266"/>
    <property type="project" value="MGI"/>
</dbReference>
<dbReference type="GO" id="GO:0008270">
    <property type="term" value="F:zinc ion binding"/>
    <property type="evidence" value="ECO:0007669"/>
    <property type="project" value="InterPro"/>
</dbReference>
<dbReference type="GO" id="GO:0007498">
    <property type="term" value="P:mesoderm development"/>
    <property type="evidence" value="ECO:0000266"/>
    <property type="project" value="MGI"/>
</dbReference>
<dbReference type="GO" id="GO:0045944">
    <property type="term" value="P:positive regulation of transcription by RNA polymerase II"/>
    <property type="evidence" value="ECO:0000266"/>
    <property type="project" value="MGI"/>
</dbReference>
<dbReference type="FunFam" id="2.60.40.4240:FF:000001">
    <property type="entry name" value="Churchill domain containing 1"/>
    <property type="match status" value="1"/>
</dbReference>
<dbReference type="Gene3D" id="2.60.40.4240">
    <property type="entry name" value="Transcription activator, Churchill"/>
    <property type="match status" value="1"/>
</dbReference>
<dbReference type="InterPro" id="IPR038543">
    <property type="entry name" value="Churchill_sf"/>
</dbReference>
<dbReference type="InterPro" id="IPR009508">
    <property type="entry name" value="Transcrpt_activator_Churchill"/>
</dbReference>
<dbReference type="PANTHER" id="PTHR31931">
    <property type="entry name" value="PROTEIN CHURCHILL"/>
    <property type="match status" value="1"/>
</dbReference>
<dbReference type="PANTHER" id="PTHR31931:SF2">
    <property type="entry name" value="PROTEIN CHURCHILL"/>
    <property type="match status" value="1"/>
</dbReference>
<dbReference type="Pfam" id="PF06573">
    <property type="entry name" value="Churchill"/>
    <property type="match status" value="1"/>
</dbReference>
<organism>
    <name type="scientific">Mus musculus</name>
    <name type="common">Mouse</name>
    <dbReference type="NCBI Taxonomy" id="10090"/>
    <lineage>
        <taxon>Eukaryota</taxon>
        <taxon>Metazoa</taxon>
        <taxon>Chordata</taxon>
        <taxon>Craniata</taxon>
        <taxon>Vertebrata</taxon>
        <taxon>Euteleostomi</taxon>
        <taxon>Mammalia</taxon>
        <taxon>Eutheria</taxon>
        <taxon>Euarchontoglires</taxon>
        <taxon>Glires</taxon>
        <taxon>Rodentia</taxon>
        <taxon>Myomorpha</taxon>
        <taxon>Muroidea</taxon>
        <taxon>Muridae</taxon>
        <taxon>Murinae</taxon>
        <taxon>Mus</taxon>
        <taxon>Mus</taxon>
    </lineage>
</organism>
<reference key="1">
    <citation type="journal article" date="2004" name="Genome Res.">
        <title>The status, quality, and expansion of the NIH full-length cDNA project: the Mammalian Gene Collection (MGC).</title>
        <authorList>
            <consortium name="The MGC Project Team"/>
        </authorList>
    </citation>
    <scope>NUCLEOTIDE SEQUENCE [LARGE SCALE MRNA] (ISOFORMS 1 AND 2)</scope>
    <source>
        <strain>C57BL/6J</strain>
        <tissue>Brain</tissue>
        <tissue>Mammary gland</tissue>
    </source>
</reference>